<name>VSY1_TRYCO</name>
<organism>
    <name type="scientific">Trypanosoma congolense</name>
    <dbReference type="NCBI Taxonomy" id="5692"/>
    <lineage>
        <taxon>Eukaryota</taxon>
        <taxon>Discoba</taxon>
        <taxon>Euglenozoa</taxon>
        <taxon>Kinetoplastea</taxon>
        <taxon>Metakinetoplastina</taxon>
        <taxon>Trypanosomatida</taxon>
        <taxon>Trypanosomatidae</taxon>
        <taxon>Trypanosoma</taxon>
        <taxon>Nannomonas</taxon>
    </lineage>
</organism>
<keyword id="KW-1003">Cell membrane</keyword>
<keyword id="KW-0903">Direct protein sequencing</keyword>
<keyword id="KW-0325">Glycoprotein</keyword>
<keyword id="KW-0336">GPI-anchor</keyword>
<keyword id="KW-0449">Lipoprotein</keyword>
<keyword id="KW-0472">Membrane</keyword>
<keyword id="KW-0732">Signal</keyword>
<keyword id="KW-0821">Trypanosomiasis</keyword>
<comment type="function">
    <text>VSG forms a coat on the surface of the parasite. The trypanosome evades the immune response of the host by expressing a series of antigenically distinct VSGs from an estimated 1000 VSG genes.</text>
</comment>
<comment type="subcellular location">
    <subcellularLocation>
        <location>Cell membrane</location>
        <topology>Lipid-anchor</topology>
        <topology>GPI-anchor</topology>
    </subcellularLocation>
    <text evidence="1">A soluble form is released from ruptured cells by the action of a PI-PLC.</text>
</comment>
<reference key="1">
    <citation type="journal article" date="1987" name="Biochemistry">
        <title>Trypanosoma congolense: structure and molecular organization of the surface glycoproteins of two early bloodstream variants.</title>
        <authorList>
            <person name="Strickler J.E."/>
            <person name="Binder D.A."/>
            <person name="L'Italien J.J."/>
            <person name="Shimamoto G.T."/>
            <person name="Wait S.W."/>
            <person name="Dalheim L.J."/>
            <person name="Novotny J."/>
            <person name="Radding J.A."/>
            <person name="Konigsberg W.H."/>
            <person name="Armstrong M.Y.K."/>
            <person name="Richards F.F."/>
            <person name="Lalor T.M."/>
        </authorList>
    </citation>
    <scope>NUCLEOTIDE SEQUENCE [MRNA]</scope>
    <scope>PARTIAL PROTEIN SEQUENCE</scope>
    <source>
        <strain>YnAT 1.1</strain>
    </source>
</reference>
<evidence type="ECO:0000250" key="1"/>
<evidence type="ECO:0000255" key="2"/>
<evidence type="ECO:0000256" key="3">
    <source>
        <dbReference type="SAM" id="MobiDB-lite"/>
    </source>
</evidence>
<protein>
    <recommendedName>
        <fullName>Variant surface glycoprotein YnAT 1.1</fullName>
        <shortName>VSG</shortName>
    </recommendedName>
</protein>
<accession>P20948</accession>
<feature type="signal peptide">
    <location>
        <begin position="1"/>
        <end position="28"/>
    </location>
</feature>
<feature type="chain" id="PRO_0000036453" description="Variant surface glycoprotein YnAT 1.1">
    <location>
        <begin position="29"/>
        <end position="400"/>
    </location>
</feature>
<feature type="propeptide" id="PRO_0000036454" description="Removed in mature form" evidence="2">
    <location>
        <begin position="401"/>
        <end position="419"/>
    </location>
</feature>
<feature type="region of interest" description="Disordered" evidence="3">
    <location>
        <begin position="369"/>
        <end position="405"/>
    </location>
</feature>
<feature type="compositionally biased region" description="Polar residues" evidence="3">
    <location>
        <begin position="372"/>
        <end position="384"/>
    </location>
</feature>
<feature type="compositionally biased region" description="Low complexity" evidence="3">
    <location>
        <begin position="395"/>
        <end position="405"/>
    </location>
</feature>
<feature type="lipid moiety-binding region" description="GPI-anchor amidated serine" evidence="2">
    <location>
        <position position="400"/>
    </location>
</feature>
<feature type="glycosylation site" description="N-linked (GlcNAc...) asparagine">
    <location>
        <position position="82"/>
    </location>
</feature>
<feature type="glycosylation site" description="N-linked (GlcNAc...) asparagine">
    <location>
        <position position="358"/>
    </location>
</feature>
<feature type="glycosylation site" description="N-linked (GlcNAc...) (high mannose) asparagine">
    <location>
        <position position="379"/>
    </location>
</feature>
<dbReference type="EMBL" id="M15112">
    <property type="protein sequence ID" value="AAA30298.1"/>
    <property type="molecule type" value="mRNA"/>
</dbReference>
<dbReference type="PIR" id="A27539">
    <property type="entry name" value="A27539"/>
</dbReference>
<dbReference type="SMR" id="P20948"/>
<dbReference type="VEuPathDB" id="TriTrypDB:TcIL3000.A.H_000077000"/>
<dbReference type="GO" id="GO:0005886">
    <property type="term" value="C:plasma membrane"/>
    <property type="evidence" value="ECO:0007669"/>
    <property type="project" value="UniProtKB-SubCell"/>
</dbReference>
<dbReference type="GO" id="GO:0098552">
    <property type="term" value="C:side of membrane"/>
    <property type="evidence" value="ECO:0007669"/>
    <property type="project" value="UniProtKB-KW"/>
</dbReference>
<dbReference type="InterPro" id="IPR025932">
    <property type="entry name" value="Trypano_VSG_B_N_dom"/>
</dbReference>
<dbReference type="Pfam" id="PF13206">
    <property type="entry name" value="VSG_B"/>
    <property type="match status" value="1"/>
</dbReference>
<proteinExistence type="evidence at protein level"/>
<sequence length="419" mass="44767">MKRVLSNVLKAWIFTIVAFHNFSTSVTADAPVNAAEYNALCRLYNIARAGEGLKEEDWLPCAGKAACEKTAASIEDVFMKLNFSEPSAVVTTLDGTRVELQNSASTRIKRAKLAKVLAAAETIKAQQLKYHESSKSLLESAKANFTKAIVGGWGNPTTPDESGLPTTFKTNRADDCKLAGGNGGKSLVFDIACLCTTSDSASGSKYTCGPKSGDNGSGWLDNNGDNQGKPAAKEAWKNLRADCRRQSAGVRVTPELISQSLVIFEGLIGTRAASGHDNARYIFGTVATAQSCGHSTATNKGSIDYKASNAQQRGDIEWEKNLRMAEGDLRGLLTAKQLVAALQARAEHLEDAAFTIFNESVLETQIAWESSRPPSTDANTSQKGPLQRPEKSGESSHLPSGSSHGTKAIRSILHVALLM</sequence>